<keyword id="KW-0687">Ribonucleoprotein</keyword>
<keyword id="KW-0689">Ribosomal protein</keyword>
<evidence type="ECO:0000255" key="1">
    <source>
        <dbReference type="HAMAP-Rule" id="MF_00368"/>
    </source>
</evidence>
<evidence type="ECO:0000305" key="2"/>
<sequence length="127" mass="12808">MSTEALLEQIGKLTLVEAADLVKKMEDKFGISAAAPVAVAAVGAAPAGAGAAEEASTFNVILKGFDSAKKIEVIKLVREITGLGLADAKGLVEAGGKAVKEGVAKAEADDLKKKFEGAGAQIELKAS</sequence>
<reference key="1">
    <citation type="journal article" date="2004" name="J. Bacteriol.">
        <title>Comparative genomics of two Leptospira interrogans serovars reveals novel insights into physiology and pathogenesis.</title>
        <authorList>
            <person name="Nascimento A.L.T.O."/>
            <person name="Ko A.I."/>
            <person name="Martins E.A.L."/>
            <person name="Monteiro-Vitorello C.B."/>
            <person name="Ho P.L."/>
            <person name="Haake D.A."/>
            <person name="Verjovski-Almeida S."/>
            <person name="Hartskeerl R.A."/>
            <person name="Marques M.V."/>
            <person name="Oliveira M.C."/>
            <person name="Menck C.F.M."/>
            <person name="Leite L.C.C."/>
            <person name="Carrer H."/>
            <person name="Coutinho L.L."/>
            <person name="Degrave W.M."/>
            <person name="Dellagostin O.A."/>
            <person name="El-Dorry H."/>
            <person name="Ferro E.S."/>
            <person name="Ferro M.I.T."/>
            <person name="Furlan L.R."/>
            <person name="Gamberini M."/>
            <person name="Giglioti E.A."/>
            <person name="Goes-Neto A."/>
            <person name="Goldman G.H."/>
            <person name="Goldman M.H.S."/>
            <person name="Harakava R."/>
            <person name="Jeronimo S.M.B."/>
            <person name="Junqueira-de-Azevedo I.L.M."/>
            <person name="Kimura E.T."/>
            <person name="Kuramae E.E."/>
            <person name="Lemos E.G.M."/>
            <person name="Lemos M.V.F."/>
            <person name="Marino C.L."/>
            <person name="Nunes L.R."/>
            <person name="de Oliveira R.C."/>
            <person name="Pereira G.G."/>
            <person name="Reis M.S."/>
            <person name="Schriefer A."/>
            <person name="Siqueira W.J."/>
            <person name="Sommer P."/>
            <person name="Tsai S.M."/>
            <person name="Simpson A.J.G."/>
            <person name="Ferro J.A."/>
            <person name="Camargo L.E.A."/>
            <person name="Kitajima J.P."/>
            <person name="Setubal J.C."/>
            <person name="Van Sluys M.A."/>
        </authorList>
    </citation>
    <scope>NUCLEOTIDE SEQUENCE [LARGE SCALE GENOMIC DNA]</scope>
    <source>
        <strain>Fiocruz L1-130</strain>
    </source>
</reference>
<proteinExistence type="inferred from homology"/>
<feature type="chain" id="PRO_0000157540" description="Large ribosomal subunit protein bL12">
    <location>
        <begin position="1"/>
        <end position="127"/>
    </location>
</feature>
<accession>Q72UA9</accession>
<organism>
    <name type="scientific">Leptospira interrogans serogroup Icterohaemorrhagiae serovar copenhageni (strain Fiocruz L1-130)</name>
    <dbReference type="NCBI Taxonomy" id="267671"/>
    <lineage>
        <taxon>Bacteria</taxon>
        <taxon>Pseudomonadati</taxon>
        <taxon>Spirochaetota</taxon>
        <taxon>Spirochaetia</taxon>
        <taxon>Leptospirales</taxon>
        <taxon>Leptospiraceae</taxon>
        <taxon>Leptospira</taxon>
    </lineage>
</organism>
<comment type="function">
    <text evidence="1">Forms part of the ribosomal stalk which helps the ribosome interact with GTP-bound translation factors. Is thus essential for accurate translation.</text>
</comment>
<comment type="subunit">
    <text evidence="1">Homodimer. Part of the ribosomal stalk of the 50S ribosomal subunit. Forms a multimeric L10(L12)X complex, where L10 forms an elongated spine to which 2 to 4 L12 dimers bind in a sequential fashion. Binds GTP-bound translation factors.</text>
</comment>
<comment type="similarity">
    <text evidence="1">Belongs to the bacterial ribosomal protein bL12 family.</text>
</comment>
<protein>
    <recommendedName>
        <fullName evidence="1">Large ribosomal subunit protein bL12</fullName>
    </recommendedName>
    <alternativeName>
        <fullName evidence="2">50S ribosomal protein L7/L12</fullName>
    </alternativeName>
</protein>
<name>RL7_LEPIC</name>
<dbReference type="EMBL" id="AE016823">
    <property type="protein sequence ID" value="AAS69369.1"/>
    <property type="molecule type" value="Genomic_DNA"/>
</dbReference>
<dbReference type="RefSeq" id="WP_000102400.1">
    <property type="nucleotide sequence ID" value="NC_005823.1"/>
</dbReference>
<dbReference type="SMR" id="Q72UA9"/>
<dbReference type="GeneID" id="61144092"/>
<dbReference type="KEGG" id="lic:LIC_10752"/>
<dbReference type="HOGENOM" id="CLU_086499_3_0_12"/>
<dbReference type="Proteomes" id="UP000007037">
    <property type="component" value="Chromosome I"/>
</dbReference>
<dbReference type="GO" id="GO:0022625">
    <property type="term" value="C:cytosolic large ribosomal subunit"/>
    <property type="evidence" value="ECO:0007669"/>
    <property type="project" value="TreeGrafter"/>
</dbReference>
<dbReference type="GO" id="GO:0003729">
    <property type="term" value="F:mRNA binding"/>
    <property type="evidence" value="ECO:0007669"/>
    <property type="project" value="TreeGrafter"/>
</dbReference>
<dbReference type="GO" id="GO:0003735">
    <property type="term" value="F:structural constituent of ribosome"/>
    <property type="evidence" value="ECO:0007669"/>
    <property type="project" value="InterPro"/>
</dbReference>
<dbReference type="GO" id="GO:0006412">
    <property type="term" value="P:translation"/>
    <property type="evidence" value="ECO:0007669"/>
    <property type="project" value="UniProtKB-UniRule"/>
</dbReference>
<dbReference type="CDD" id="cd00387">
    <property type="entry name" value="Ribosomal_L7_L12"/>
    <property type="match status" value="1"/>
</dbReference>
<dbReference type="FunFam" id="3.30.1390.10:FF:000001">
    <property type="entry name" value="50S ribosomal protein L7/L12"/>
    <property type="match status" value="1"/>
</dbReference>
<dbReference type="Gene3D" id="3.30.1390.10">
    <property type="match status" value="1"/>
</dbReference>
<dbReference type="Gene3D" id="1.20.5.710">
    <property type="entry name" value="Single helix bin"/>
    <property type="match status" value="1"/>
</dbReference>
<dbReference type="HAMAP" id="MF_00368">
    <property type="entry name" value="Ribosomal_bL12"/>
    <property type="match status" value="1"/>
</dbReference>
<dbReference type="InterPro" id="IPR000206">
    <property type="entry name" value="Ribosomal_bL12"/>
</dbReference>
<dbReference type="InterPro" id="IPR013823">
    <property type="entry name" value="Ribosomal_bL12_C"/>
</dbReference>
<dbReference type="InterPro" id="IPR014719">
    <property type="entry name" value="Ribosomal_bL12_C/ClpS-like"/>
</dbReference>
<dbReference type="InterPro" id="IPR008932">
    <property type="entry name" value="Ribosomal_bL12_oligo"/>
</dbReference>
<dbReference type="InterPro" id="IPR036235">
    <property type="entry name" value="Ribosomal_bL12_oligo_N_sf"/>
</dbReference>
<dbReference type="NCBIfam" id="TIGR00855">
    <property type="entry name" value="L12"/>
    <property type="match status" value="1"/>
</dbReference>
<dbReference type="PANTHER" id="PTHR45987">
    <property type="entry name" value="39S RIBOSOMAL PROTEIN L12"/>
    <property type="match status" value="1"/>
</dbReference>
<dbReference type="PANTHER" id="PTHR45987:SF4">
    <property type="entry name" value="LARGE RIBOSOMAL SUBUNIT PROTEIN BL12M"/>
    <property type="match status" value="1"/>
</dbReference>
<dbReference type="Pfam" id="PF00542">
    <property type="entry name" value="Ribosomal_L12"/>
    <property type="match status" value="1"/>
</dbReference>
<dbReference type="Pfam" id="PF16320">
    <property type="entry name" value="Ribosomal_L12_N"/>
    <property type="match status" value="1"/>
</dbReference>
<dbReference type="SUPFAM" id="SSF54736">
    <property type="entry name" value="ClpS-like"/>
    <property type="match status" value="1"/>
</dbReference>
<dbReference type="SUPFAM" id="SSF48300">
    <property type="entry name" value="Ribosomal protein L7/12, oligomerisation (N-terminal) domain"/>
    <property type="match status" value="1"/>
</dbReference>
<gene>
    <name evidence="1" type="primary">rplL</name>
    <name type="ordered locus">LIC_10752</name>
</gene>